<organism>
    <name type="scientific">Bacillus licheniformis (strain ATCC 14580 / DSM 13 / JCM 2505 / CCUG 7422 / NBRC 12200 / NCIMB 9375 / NCTC 10341 / NRRL NRS-1264 / Gibson 46)</name>
    <dbReference type="NCBI Taxonomy" id="279010"/>
    <lineage>
        <taxon>Bacteria</taxon>
        <taxon>Bacillati</taxon>
        <taxon>Bacillota</taxon>
        <taxon>Bacilli</taxon>
        <taxon>Bacillales</taxon>
        <taxon>Bacillaceae</taxon>
        <taxon>Bacillus</taxon>
    </lineage>
</organism>
<gene>
    <name evidence="1" type="primary">rsmG</name>
    <name type="ordered locus">BLi04373</name>
    <name type="ordered locus">BL00108</name>
</gene>
<name>RSMG_BACLD</name>
<sequence length="239" mass="27073">MNIEQFTAGLEKKGISLSSFQLEQFETYYEWLVEWNEKMNLTSITEKKEVYLKHFYDSIAASFYVDFKKMNTLCDVGAGAGFPSLPIKICFPHLHVTIVDSLNKRIHFLNQLSDALKLENTAFYHDRAETFGRSKDHRESYDVVTARAVARLSVLSELCLPLVKKDGLFVALKAASADEEIETGKKAIKTLGGKIETVHSFQLPIEESERNIIVIKKQSQTPKKFPRKPGTPNKSPIEG</sequence>
<protein>
    <recommendedName>
        <fullName evidence="1">Ribosomal RNA small subunit methyltransferase G</fullName>
        <ecNumber evidence="1">2.1.1.-</ecNumber>
    </recommendedName>
    <alternativeName>
        <fullName evidence="1">16S rRNA 7-methylguanosine methyltransferase</fullName>
        <shortName evidence="1">16S rRNA m7G methyltransferase</shortName>
    </alternativeName>
</protein>
<comment type="function">
    <text evidence="1">Specifically methylates the N7 position of guanine in position 535 of 16S rRNA.</text>
</comment>
<comment type="subcellular location">
    <subcellularLocation>
        <location evidence="1">Cytoplasm</location>
    </subcellularLocation>
</comment>
<comment type="similarity">
    <text evidence="1">Belongs to the methyltransferase superfamily. RNA methyltransferase RsmG family.</text>
</comment>
<dbReference type="EC" id="2.1.1.-" evidence="1"/>
<dbReference type="EMBL" id="AE017333">
    <property type="protein sequence ID" value="AAU43181.1"/>
    <property type="molecule type" value="Genomic_DNA"/>
</dbReference>
<dbReference type="EMBL" id="CP000002">
    <property type="protein sequence ID" value="AAU25799.1"/>
    <property type="molecule type" value="Genomic_DNA"/>
</dbReference>
<dbReference type="RefSeq" id="WP_003178044.1">
    <property type="nucleotide sequence ID" value="NC_006322.1"/>
</dbReference>
<dbReference type="SMR" id="Q65CN3"/>
<dbReference type="STRING" id="279010.BL00108"/>
<dbReference type="GeneID" id="92859057"/>
<dbReference type="KEGG" id="bld:BLi04373"/>
<dbReference type="KEGG" id="bli:BL00108"/>
<dbReference type="eggNOG" id="COG0357">
    <property type="taxonomic scope" value="Bacteria"/>
</dbReference>
<dbReference type="HOGENOM" id="CLU_065341_0_0_9"/>
<dbReference type="Proteomes" id="UP000000606">
    <property type="component" value="Chromosome"/>
</dbReference>
<dbReference type="GO" id="GO:0005829">
    <property type="term" value="C:cytosol"/>
    <property type="evidence" value="ECO:0007669"/>
    <property type="project" value="TreeGrafter"/>
</dbReference>
<dbReference type="GO" id="GO:0070043">
    <property type="term" value="F:rRNA (guanine-N7-)-methyltransferase activity"/>
    <property type="evidence" value="ECO:0007669"/>
    <property type="project" value="UniProtKB-UniRule"/>
</dbReference>
<dbReference type="CDD" id="cd02440">
    <property type="entry name" value="AdoMet_MTases"/>
    <property type="match status" value="1"/>
</dbReference>
<dbReference type="FunFam" id="3.40.50.150:FF:000041">
    <property type="entry name" value="Ribosomal RNA small subunit methyltransferase G"/>
    <property type="match status" value="1"/>
</dbReference>
<dbReference type="Gene3D" id="3.40.50.150">
    <property type="entry name" value="Vaccinia Virus protein VP39"/>
    <property type="match status" value="1"/>
</dbReference>
<dbReference type="HAMAP" id="MF_00074">
    <property type="entry name" value="16SrRNA_methyltr_G"/>
    <property type="match status" value="1"/>
</dbReference>
<dbReference type="InterPro" id="IPR003682">
    <property type="entry name" value="rRNA_ssu_MeTfrase_G"/>
</dbReference>
<dbReference type="InterPro" id="IPR029063">
    <property type="entry name" value="SAM-dependent_MTases_sf"/>
</dbReference>
<dbReference type="NCBIfam" id="TIGR00138">
    <property type="entry name" value="rsmG_gidB"/>
    <property type="match status" value="1"/>
</dbReference>
<dbReference type="PANTHER" id="PTHR31760">
    <property type="entry name" value="S-ADENOSYL-L-METHIONINE-DEPENDENT METHYLTRANSFERASES SUPERFAMILY PROTEIN"/>
    <property type="match status" value="1"/>
</dbReference>
<dbReference type="PANTHER" id="PTHR31760:SF0">
    <property type="entry name" value="S-ADENOSYL-L-METHIONINE-DEPENDENT METHYLTRANSFERASES SUPERFAMILY PROTEIN"/>
    <property type="match status" value="1"/>
</dbReference>
<dbReference type="Pfam" id="PF02527">
    <property type="entry name" value="GidB"/>
    <property type="match status" value="1"/>
</dbReference>
<dbReference type="PIRSF" id="PIRSF003078">
    <property type="entry name" value="GidB"/>
    <property type="match status" value="1"/>
</dbReference>
<dbReference type="SUPFAM" id="SSF53335">
    <property type="entry name" value="S-adenosyl-L-methionine-dependent methyltransferases"/>
    <property type="match status" value="1"/>
</dbReference>
<proteinExistence type="inferred from homology"/>
<reference key="1">
    <citation type="journal article" date="2004" name="J. Mol. Microbiol. Biotechnol.">
        <title>The complete genome sequence of Bacillus licheniformis DSM13, an organism with great industrial potential.</title>
        <authorList>
            <person name="Veith B."/>
            <person name="Herzberg C."/>
            <person name="Steckel S."/>
            <person name="Feesche J."/>
            <person name="Maurer K.H."/>
            <person name="Ehrenreich P."/>
            <person name="Baeumer S."/>
            <person name="Henne A."/>
            <person name="Liesegang H."/>
            <person name="Merkl R."/>
            <person name="Ehrenreich A."/>
            <person name="Gottschalk G."/>
        </authorList>
    </citation>
    <scope>NUCLEOTIDE SEQUENCE [LARGE SCALE GENOMIC DNA]</scope>
    <source>
        <strain>ATCC 14580 / DSM 13 / JCM 2505 / CCUG 7422 / NBRC 12200 / NCIMB 9375 / NCTC 10341 / NRRL NRS-1264 / Gibson 46</strain>
    </source>
</reference>
<reference key="2">
    <citation type="journal article" date="2004" name="Genome Biol.">
        <title>Complete genome sequence of the industrial bacterium Bacillus licheniformis and comparisons with closely related Bacillus species.</title>
        <authorList>
            <person name="Rey M.W."/>
            <person name="Ramaiya P."/>
            <person name="Nelson B.A."/>
            <person name="Brody-Karpin S.D."/>
            <person name="Zaretsky E.J."/>
            <person name="Tang M."/>
            <person name="Lopez de Leon A."/>
            <person name="Xiang H."/>
            <person name="Gusti V."/>
            <person name="Clausen I.G."/>
            <person name="Olsen P.B."/>
            <person name="Rasmussen M.D."/>
            <person name="Andersen J.T."/>
            <person name="Joergensen P.L."/>
            <person name="Larsen T.S."/>
            <person name="Sorokin A."/>
            <person name="Bolotin A."/>
            <person name="Lapidus A."/>
            <person name="Galleron N."/>
            <person name="Ehrlich S.D."/>
            <person name="Berka R.M."/>
        </authorList>
    </citation>
    <scope>NUCLEOTIDE SEQUENCE [LARGE SCALE GENOMIC DNA]</scope>
    <source>
        <strain>ATCC 14580 / DSM 13 / JCM 2505 / CCUG 7422 / NBRC 12200 / NCIMB 9375 / NCTC 10341 / NRRL NRS-1264 / Gibson 46</strain>
    </source>
</reference>
<accession>Q65CN3</accession>
<accession>Q62N62</accession>
<evidence type="ECO:0000255" key="1">
    <source>
        <dbReference type="HAMAP-Rule" id="MF_00074"/>
    </source>
</evidence>
<evidence type="ECO:0000256" key="2">
    <source>
        <dbReference type="SAM" id="MobiDB-lite"/>
    </source>
</evidence>
<feature type="chain" id="PRO_0000184214" description="Ribosomal RNA small subunit methyltransferase G">
    <location>
        <begin position="1"/>
        <end position="239"/>
    </location>
</feature>
<feature type="region of interest" description="Disordered" evidence="2">
    <location>
        <begin position="216"/>
        <end position="239"/>
    </location>
</feature>
<feature type="binding site" evidence="1">
    <location>
        <position position="77"/>
    </location>
    <ligand>
        <name>S-adenosyl-L-methionine</name>
        <dbReference type="ChEBI" id="CHEBI:59789"/>
    </ligand>
</feature>
<feature type="binding site" evidence="1">
    <location>
        <position position="82"/>
    </location>
    <ligand>
        <name>S-adenosyl-L-methionine</name>
        <dbReference type="ChEBI" id="CHEBI:59789"/>
    </ligand>
</feature>
<feature type="binding site" evidence="1">
    <location>
        <begin position="128"/>
        <end position="129"/>
    </location>
    <ligand>
        <name>S-adenosyl-L-methionine</name>
        <dbReference type="ChEBI" id="CHEBI:59789"/>
    </ligand>
</feature>
<feature type="binding site" evidence="1">
    <location>
        <position position="147"/>
    </location>
    <ligand>
        <name>S-adenosyl-L-methionine</name>
        <dbReference type="ChEBI" id="CHEBI:59789"/>
    </ligand>
</feature>
<keyword id="KW-0963">Cytoplasm</keyword>
<keyword id="KW-0489">Methyltransferase</keyword>
<keyword id="KW-1185">Reference proteome</keyword>
<keyword id="KW-0698">rRNA processing</keyword>
<keyword id="KW-0949">S-adenosyl-L-methionine</keyword>
<keyword id="KW-0808">Transferase</keyword>